<keyword id="KW-0067">ATP-binding</keyword>
<keyword id="KW-0436">Ligase</keyword>
<keyword id="KW-0547">Nucleotide-binding</keyword>
<keyword id="KW-0648">Protein biosynthesis</keyword>
<protein>
    <recommendedName>
        <fullName evidence="1">Aspartyl/glutamyl-tRNA(Asn/Gln) amidotransferase subunit B</fullName>
        <shortName evidence="1">Asp/Glu-ADT subunit B</shortName>
        <ecNumber evidence="1">6.3.5.-</ecNumber>
    </recommendedName>
</protein>
<evidence type="ECO:0000255" key="1">
    <source>
        <dbReference type="HAMAP-Rule" id="MF_00121"/>
    </source>
</evidence>
<gene>
    <name evidence="1" type="primary">gatB</name>
    <name type="ordered locus">lwe1771</name>
</gene>
<proteinExistence type="inferred from homology"/>
<reference key="1">
    <citation type="journal article" date="2006" name="J. Bacteriol.">
        <title>Whole-genome sequence of Listeria welshimeri reveals common steps in genome reduction with Listeria innocua as compared to Listeria monocytogenes.</title>
        <authorList>
            <person name="Hain T."/>
            <person name="Steinweg C."/>
            <person name="Kuenne C.T."/>
            <person name="Billion A."/>
            <person name="Ghai R."/>
            <person name="Chatterjee S.S."/>
            <person name="Domann E."/>
            <person name="Kaerst U."/>
            <person name="Goesmann A."/>
            <person name="Bekel T."/>
            <person name="Bartels D."/>
            <person name="Kaiser O."/>
            <person name="Meyer F."/>
            <person name="Puehler A."/>
            <person name="Weisshaar B."/>
            <person name="Wehland J."/>
            <person name="Liang C."/>
            <person name="Dandekar T."/>
            <person name="Lampidis R."/>
            <person name="Kreft J."/>
            <person name="Goebel W."/>
            <person name="Chakraborty T."/>
        </authorList>
    </citation>
    <scope>NUCLEOTIDE SEQUENCE [LARGE SCALE GENOMIC DNA]</scope>
    <source>
        <strain>ATCC 35897 / DSM 20650 / CCUG 15529 / CIP 8149 / NCTC 11857 / SLCC 5334 / V8</strain>
    </source>
</reference>
<organism>
    <name type="scientific">Listeria welshimeri serovar 6b (strain ATCC 35897 / DSM 20650 / CCUG 15529 / CIP 8149 / NCTC 11857 / SLCC 5334 / V8)</name>
    <dbReference type="NCBI Taxonomy" id="386043"/>
    <lineage>
        <taxon>Bacteria</taxon>
        <taxon>Bacillati</taxon>
        <taxon>Bacillota</taxon>
        <taxon>Bacilli</taxon>
        <taxon>Bacillales</taxon>
        <taxon>Listeriaceae</taxon>
        <taxon>Listeria</taxon>
    </lineage>
</organism>
<name>GATB_LISW6</name>
<comment type="function">
    <text evidence="1">Allows the formation of correctly charged Asn-tRNA(Asn) or Gln-tRNA(Gln) through the transamidation of misacylated Asp-tRNA(Asn) or Glu-tRNA(Gln) in organisms which lack either or both of asparaginyl-tRNA or glutaminyl-tRNA synthetases. The reaction takes place in the presence of glutamine and ATP through an activated phospho-Asp-tRNA(Asn) or phospho-Glu-tRNA(Gln).</text>
</comment>
<comment type="catalytic activity">
    <reaction evidence="1">
        <text>L-glutamyl-tRNA(Gln) + L-glutamine + ATP + H2O = L-glutaminyl-tRNA(Gln) + L-glutamate + ADP + phosphate + H(+)</text>
        <dbReference type="Rhea" id="RHEA:17521"/>
        <dbReference type="Rhea" id="RHEA-COMP:9681"/>
        <dbReference type="Rhea" id="RHEA-COMP:9684"/>
        <dbReference type="ChEBI" id="CHEBI:15377"/>
        <dbReference type="ChEBI" id="CHEBI:15378"/>
        <dbReference type="ChEBI" id="CHEBI:29985"/>
        <dbReference type="ChEBI" id="CHEBI:30616"/>
        <dbReference type="ChEBI" id="CHEBI:43474"/>
        <dbReference type="ChEBI" id="CHEBI:58359"/>
        <dbReference type="ChEBI" id="CHEBI:78520"/>
        <dbReference type="ChEBI" id="CHEBI:78521"/>
        <dbReference type="ChEBI" id="CHEBI:456216"/>
    </reaction>
</comment>
<comment type="catalytic activity">
    <reaction evidence="1">
        <text>L-aspartyl-tRNA(Asn) + L-glutamine + ATP + H2O = L-asparaginyl-tRNA(Asn) + L-glutamate + ADP + phosphate + 2 H(+)</text>
        <dbReference type="Rhea" id="RHEA:14513"/>
        <dbReference type="Rhea" id="RHEA-COMP:9674"/>
        <dbReference type="Rhea" id="RHEA-COMP:9677"/>
        <dbReference type="ChEBI" id="CHEBI:15377"/>
        <dbReference type="ChEBI" id="CHEBI:15378"/>
        <dbReference type="ChEBI" id="CHEBI:29985"/>
        <dbReference type="ChEBI" id="CHEBI:30616"/>
        <dbReference type="ChEBI" id="CHEBI:43474"/>
        <dbReference type="ChEBI" id="CHEBI:58359"/>
        <dbReference type="ChEBI" id="CHEBI:78515"/>
        <dbReference type="ChEBI" id="CHEBI:78516"/>
        <dbReference type="ChEBI" id="CHEBI:456216"/>
    </reaction>
</comment>
<comment type="subunit">
    <text evidence="1">Heterotrimer of A, B and C subunits.</text>
</comment>
<comment type="similarity">
    <text evidence="1">Belongs to the GatB/GatE family. GatB subfamily.</text>
</comment>
<dbReference type="EC" id="6.3.5.-" evidence="1"/>
<dbReference type="EMBL" id="AM263198">
    <property type="protein sequence ID" value="CAK21189.1"/>
    <property type="molecule type" value="Genomic_DNA"/>
</dbReference>
<dbReference type="RefSeq" id="WP_011702549.1">
    <property type="nucleotide sequence ID" value="NC_008555.1"/>
</dbReference>
<dbReference type="SMR" id="A0AJK7"/>
<dbReference type="STRING" id="386043.lwe1771"/>
<dbReference type="GeneID" id="61189670"/>
<dbReference type="KEGG" id="lwe:lwe1771"/>
<dbReference type="eggNOG" id="COG0064">
    <property type="taxonomic scope" value="Bacteria"/>
</dbReference>
<dbReference type="HOGENOM" id="CLU_019240_0_0_9"/>
<dbReference type="OrthoDB" id="9804078at2"/>
<dbReference type="Proteomes" id="UP000000779">
    <property type="component" value="Chromosome"/>
</dbReference>
<dbReference type="GO" id="GO:0050566">
    <property type="term" value="F:asparaginyl-tRNA synthase (glutamine-hydrolyzing) activity"/>
    <property type="evidence" value="ECO:0007669"/>
    <property type="project" value="RHEA"/>
</dbReference>
<dbReference type="GO" id="GO:0005524">
    <property type="term" value="F:ATP binding"/>
    <property type="evidence" value="ECO:0007669"/>
    <property type="project" value="UniProtKB-KW"/>
</dbReference>
<dbReference type="GO" id="GO:0050567">
    <property type="term" value="F:glutaminyl-tRNA synthase (glutamine-hydrolyzing) activity"/>
    <property type="evidence" value="ECO:0007669"/>
    <property type="project" value="UniProtKB-UniRule"/>
</dbReference>
<dbReference type="GO" id="GO:0070681">
    <property type="term" value="P:glutaminyl-tRNAGln biosynthesis via transamidation"/>
    <property type="evidence" value="ECO:0007669"/>
    <property type="project" value="TreeGrafter"/>
</dbReference>
<dbReference type="GO" id="GO:0006412">
    <property type="term" value="P:translation"/>
    <property type="evidence" value="ECO:0007669"/>
    <property type="project" value="UniProtKB-UniRule"/>
</dbReference>
<dbReference type="FunFam" id="1.10.10.410:FF:000001">
    <property type="entry name" value="Aspartyl/glutamyl-tRNA(Asn/Gln) amidotransferase subunit B"/>
    <property type="match status" value="1"/>
</dbReference>
<dbReference type="FunFam" id="1.10.150.380:FF:000001">
    <property type="entry name" value="Aspartyl/glutamyl-tRNA(Asn/Gln) amidotransferase subunit B"/>
    <property type="match status" value="1"/>
</dbReference>
<dbReference type="Gene3D" id="1.10.10.410">
    <property type="match status" value="1"/>
</dbReference>
<dbReference type="Gene3D" id="1.10.150.380">
    <property type="entry name" value="GatB domain, N-terminal subdomain"/>
    <property type="match status" value="1"/>
</dbReference>
<dbReference type="HAMAP" id="MF_00121">
    <property type="entry name" value="GatB"/>
    <property type="match status" value="1"/>
</dbReference>
<dbReference type="InterPro" id="IPR017959">
    <property type="entry name" value="Asn/Gln-tRNA_amidoTrfase_suB/E"/>
</dbReference>
<dbReference type="InterPro" id="IPR006075">
    <property type="entry name" value="Asn/Gln-tRNA_Trfase_suB/E_cat"/>
</dbReference>
<dbReference type="InterPro" id="IPR018027">
    <property type="entry name" value="Asn/Gln_amidotransferase"/>
</dbReference>
<dbReference type="InterPro" id="IPR003789">
    <property type="entry name" value="Asn/Gln_tRNA_amidoTrase-B-like"/>
</dbReference>
<dbReference type="InterPro" id="IPR004413">
    <property type="entry name" value="GatB"/>
</dbReference>
<dbReference type="InterPro" id="IPR042114">
    <property type="entry name" value="GatB_C_1"/>
</dbReference>
<dbReference type="InterPro" id="IPR023168">
    <property type="entry name" value="GatB_Yqey_C_2"/>
</dbReference>
<dbReference type="InterPro" id="IPR017958">
    <property type="entry name" value="Gln-tRNA_amidoTrfase_suB_CS"/>
</dbReference>
<dbReference type="InterPro" id="IPR014746">
    <property type="entry name" value="Gln_synth/guanido_kin_cat_dom"/>
</dbReference>
<dbReference type="NCBIfam" id="TIGR00133">
    <property type="entry name" value="gatB"/>
    <property type="match status" value="1"/>
</dbReference>
<dbReference type="NCBIfam" id="NF004011">
    <property type="entry name" value="PRK05477.1-1"/>
    <property type="match status" value="1"/>
</dbReference>
<dbReference type="NCBIfam" id="NF004012">
    <property type="entry name" value="PRK05477.1-2"/>
    <property type="match status" value="1"/>
</dbReference>
<dbReference type="NCBIfam" id="NF004014">
    <property type="entry name" value="PRK05477.1-4"/>
    <property type="match status" value="1"/>
</dbReference>
<dbReference type="PANTHER" id="PTHR11659">
    <property type="entry name" value="GLUTAMYL-TRNA GLN AMIDOTRANSFERASE SUBUNIT B MITOCHONDRIAL AND PROKARYOTIC PET112-RELATED"/>
    <property type="match status" value="1"/>
</dbReference>
<dbReference type="PANTHER" id="PTHR11659:SF0">
    <property type="entry name" value="GLUTAMYL-TRNA(GLN) AMIDOTRANSFERASE SUBUNIT B, MITOCHONDRIAL"/>
    <property type="match status" value="1"/>
</dbReference>
<dbReference type="Pfam" id="PF02934">
    <property type="entry name" value="GatB_N"/>
    <property type="match status" value="1"/>
</dbReference>
<dbReference type="Pfam" id="PF02637">
    <property type="entry name" value="GatB_Yqey"/>
    <property type="match status" value="1"/>
</dbReference>
<dbReference type="SMART" id="SM00845">
    <property type="entry name" value="GatB_Yqey"/>
    <property type="match status" value="1"/>
</dbReference>
<dbReference type="SUPFAM" id="SSF89095">
    <property type="entry name" value="GatB/YqeY motif"/>
    <property type="match status" value="1"/>
</dbReference>
<dbReference type="SUPFAM" id="SSF55931">
    <property type="entry name" value="Glutamine synthetase/guanido kinase"/>
    <property type="match status" value="1"/>
</dbReference>
<dbReference type="PROSITE" id="PS01234">
    <property type="entry name" value="GATB"/>
    <property type="match status" value="1"/>
</dbReference>
<accession>A0AJK7</accession>
<feature type="chain" id="PRO_1000015988" description="Aspartyl/glutamyl-tRNA(Asn/Gln) amidotransferase subunit B">
    <location>
        <begin position="1"/>
        <end position="476"/>
    </location>
</feature>
<sequence>MNFETVIGLEVHVELKTNSKIFSSAPAHFGAEPNTNTTVVDLGMPGVLPVLNKRAVEYGMKAAMAINCEIAEHTKFDRKNYFYPDNPKAYQISQFDKPIGEHGWIEIEVGGKKKKIGITRLHLEEDAGKNTHTSHGYSLVDINRQGTPLIEIVSEPDIRSAEEAYAYLEKLKSIIQYTGVSDVKMEEGSMRCDANISIRPIGQEAFGVKTELKNLNSFNNVRKGIEYEEKRQAEVLLSGGIIEQETRRFEEATGKTSLMRIKEGSDDYRYFPEPDLVDLFIDDAWKERIRAEIPELPDKRQIRYINDLGLPAYDAMVLTLTKEMSDFFEATLAARADAKQASNWLMGEVSAYLNAEQKELNETGLTPENLAGMIKLIEAGTISSKIAKKVFRELAQNGGDAEQVVKDKGLVQISDEGALRTIIGEILDNNEQSITDYKNGKDRAVGFLVGQVMKATKGQANPPMVNKLLLEEMNKR</sequence>